<protein>
    <recommendedName>
        <fullName>Ensconsin</fullName>
    </recommendedName>
    <alternativeName>
        <fullName>Epithelial microtubule-associated protein of 115 kDa</fullName>
        <shortName>E-MAP-115</shortName>
    </alternativeName>
    <alternativeName>
        <fullName>Microtubule-associated protein 7</fullName>
        <shortName>MAP-7</shortName>
    </alternativeName>
</protein>
<organism>
    <name type="scientific">Homo sapiens</name>
    <name type="common">Human</name>
    <dbReference type="NCBI Taxonomy" id="9606"/>
    <lineage>
        <taxon>Eukaryota</taxon>
        <taxon>Metazoa</taxon>
        <taxon>Chordata</taxon>
        <taxon>Craniata</taxon>
        <taxon>Vertebrata</taxon>
        <taxon>Euteleostomi</taxon>
        <taxon>Mammalia</taxon>
        <taxon>Eutheria</taxon>
        <taxon>Euarchontoglires</taxon>
        <taxon>Primates</taxon>
        <taxon>Haplorrhini</taxon>
        <taxon>Catarrhini</taxon>
        <taxon>Hominidae</taxon>
        <taxon>Homo</taxon>
    </lineage>
</organism>
<evidence type="ECO:0000250" key="1"/>
<evidence type="ECO:0000255" key="2"/>
<evidence type="ECO:0000256" key="3">
    <source>
        <dbReference type="SAM" id="MobiDB-lite"/>
    </source>
</evidence>
<evidence type="ECO:0000269" key="4">
    <source>
    </source>
</evidence>
<evidence type="ECO:0000269" key="5">
    <source>
    </source>
</evidence>
<evidence type="ECO:0000269" key="6">
    <source>
    </source>
</evidence>
<evidence type="ECO:0000269" key="7">
    <source>
    </source>
</evidence>
<evidence type="ECO:0000269" key="8">
    <source>
    </source>
</evidence>
<evidence type="ECO:0000269" key="9">
    <source>
    </source>
</evidence>
<evidence type="ECO:0000303" key="10">
    <source>
    </source>
</evidence>
<evidence type="ECO:0000303" key="11">
    <source ref="2"/>
</evidence>
<evidence type="ECO:0000305" key="12"/>
<evidence type="ECO:0007744" key="13">
    <source>
    </source>
</evidence>
<evidence type="ECO:0007744" key="14">
    <source>
    </source>
</evidence>
<evidence type="ECO:0007744" key="15">
    <source>
    </source>
</evidence>
<evidence type="ECO:0007744" key="16">
    <source>
    </source>
</evidence>
<evidence type="ECO:0007744" key="17">
    <source>
    </source>
</evidence>
<evidence type="ECO:0007744" key="18">
    <source>
    </source>
</evidence>
<evidence type="ECO:0007744" key="19">
    <source>
    </source>
</evidence>
<evidence type="ECO:0007744" key="20">
    <source>
    </source>
</evidence>
<evidence type="ECO:0007744" key="21">
    <source>
    </source>
</evidence>
<evidence type="ECO:0007744" key="22">
    <source>
    </source>
</evidence>
<evidence type="ECO:0007744" key="23">
    <source>
    </source>
</evidence>
<evidence type="ECO:0007744" key="24">
    <source>
    </source>
</evidence>
<evidence type="ECO:0007744" key="25">
    <source>
    </source>
</evidence>
<evidence type="ECO:0007744" key="26">
    <source>
    </source>
</evidence>
<evidence type="ECO:0007829" key="27">
    <source>
        <dbReference type="PDB" id="7SGS"/>
    </source>
</evidence>
<dbReference type="EMBL" id="X73882">
    <property type="protein sequence ID" value="CAA52086.1"/>
    <property type="molecule type" value="mRNA"/>
</dbReference>
<dbReference type="EMBL" id="AJ242501">
    <property type="protein sequence ID" value="CAB88030.1"/>
    <property type="molecule type" value="mRNA"/>
</dbReference>
<dbReference type="EMBL" id="AJ242502">
    <property type="protein sequence ID" value="CAB88031.1"/>
    <property type="molecule type" value="mRNA"/>
</dbReference>
<dbReference type="EMBL" id="AK294461">
    <property type="protein sequence ID" value="BAH11776.1"/>
    <property type="molecule type" value="mRNA"/>
</dbReference>
<dbReference type="EMBL" id="AK296556">
    <property type="protein sequence ID" value="BAH12386.1"/>
    <property type="molecule type" value="mRNA"/>
</dbReference>
<dbReference type="EMBL" id="AK299355">
    <property type="protein sequence ID" value="BAH13013.1"/>
    <property type="molecule type" value="mRNA"/>
</dbReference>
<dbReference type="EMBL" id="AK316062">
    <property type="protein sequence ID" value="BAH14433.1"/>
    <property type="molecule type" value="mRNA"/>
</dbReference>
<dbReference type="EMBL" id="AL024508">
    <property type="status" value="NOT_ANNOTATED_CDS"/>
    <property type="molecule type" value="Genomic_DNA"/>
</dbReference>
<dbReference type="EMBL" id="AL023284">
    <property type="status" value="NOT_ANNOTATED_CDS"/>
    <property type="molecule type" value="Genomic_DNA"/>
</dbReference>
<dbReference type="EMBL" id="AL133511">
    <property type="status" value="NOT_ANNOTATED_CDS"/>
    <property type="molecule type" value="Genomic_DNA"/>
</dbReference>
<dbReference type="EMBL" id="BC025777">
    <property type="protein sequence ID" value="AAH25777.1"/>
    <property type="molecule type" value="mRNA"/>
</dbReference>
<dbReference type="CCDS" id="CCDS5178.1">
    <molecule id="Q14244-1"/>
</dbReference>
<dbReference type="CCDS" id="CCDS56452.1">
    <molecule id="Q14244-5"/>
</dbReference>
<dbReference type="CCDS" id="CCDS56453.1">
    <molecule id="Q14244-6"/>
</dbReference>
<dbReference type="CCDS" id="CCDS56454.1">
    <molecule id="Q14244-4"/>
</dbReference>
<dbReference type="CCDS" id="CCDS56455.1">
    <molecule id="Q14244-7"/>
</dbReference>
<dbReference type="CCDS" id="CCDS75528.1">
    <molecule id="Q14244-3"/>
</dbReference>
<dbReference type="CCDS" id="CCDS75529.1">
    <molecule id="Q14244-2"/>
</dbReference>
<dbReference type="PIR" id="I37356">
    <property type="entry name" value="I37356"/>
</dbReference>
<dbReference type="RefSeq" id="NP_001185537.1">
    <molecule id="Q14244-7"/>
    <property type="nucleotide sequence ID" value="NM_001198608.3"/>
</dbReference>
<dbReference type="RefSeq" id="NP_001185538.1">
    <property type="nucleotide sequence ID" value="NM_001198609.1"/>
</dbReference>
<dbReference type="RefSeq" id="NP_001185540.1">
    <molecule id="Q14244-4"/>
    <property type="nucleotide sequence ID" value="NM_001198611.3"/>
</dbReference>
<dbReference type="RefSeq" id="NP_001185543.1">
    <molecule id="Q14244-7"/>
    <property type="nucleotide sequence ID" value="NM_001198614.2"/>
</dbReference>
<dbReference type="RefSeq" id="NP_001185544.1">
    <molecule id="Q14244-6"/>
    <property type="nucleotide sequence ID" value="NM_001198615.3"/>
</dbReference>
<dbReference type="RefSeq" id="NP_001185545.1">
    <molecule id="Q14244-2"/>
    <property type="nucleotide sequence ID" value="NM_001198616.3"/>
</dbReference>
<dbReference type="RefSeq" id="NP_001185546.1">
    <molecule id="Q14244-3"/>
    <property type="nucleotide sequence ID" value="NM_001198617.3"/>
</dbReference>
<dbReference type="RefSeq" id="NP_001185547.1">
    <molecule id="Q14244-5"/>
    <property type="nucleotide sequence ID" value="NM_001198618.2"/>
</dbReference>
<dbReference type="RefSeq" id="NP_001185548.1">
    <molecule id="Q14244-5"/>
    <property type="nucleotide sequence ID" value="NM_001198619.2"/>
</dbReference>
<dbReference type="RefSeq" id="NP_001375261.1">
    <molecule id="Q14244-7"/>
    <property type="nucleotide sequence ID" value="NM_001388332.1"/>
</dbReference>
<dbReference type="RefSeq" id="NP_001375262.1">
    <molecule id="Q14244-7"/>
    <property type="nucleotide sequence ID" value="NM_001388333.1"/>
</dbReference>
<dbReference type="RefSeq" id="NP_001375269.1">
    <molecule id="Q14244-4"/>
    <property type="nucleotide sequence ID" value="NM_001388340.1"/>
</dbReference>
<dbReference type="RefSeq" id="NP_001375270.1">
    <molecule id="Q14244-4"/>
    <property type="nucleotide sequence ID" value="NM_001388341.1"/>
</dbReference>
<dbReference type="RefSeq" id="NP_001375277.1">
    <molecule id="Q14244-5"/>
    <property type="nucleotide sequence ID" value="NM_001388348.1"/>
</dbReference>
<dbReference type="RefSeq" id="NP_001375278.1">
    <molecule id="Q14244-5"/>
    <property type="nucleotide sequence ID" value="NM_001388349.1"/>
</dbReference>
<dbReference type="RefSeq" id="NP_003971.1">
    <molecule id="Q14244-1"/>
    <property type="nucleotide sequence ID" value="NM_003980.6"/>
</dbReference>
<dbReference type="RefSeq" id="XP_006715663.1">
    <property type="nucleotide sequence ID" value="XM_006715600.2"/>
</dbReference>
<dbReference type="RefSeq" id="XP_016866960.1">
    <property type="nucleotide sequence ID" value="XM_017011471.1"/>
</dbReference>
<dbReference type="PDB" id="7SGS">
    <property type="method" value="EM"/>
    <property type="resolution" value="3.30 A"/>
    <property type="chains" value="A=1-749"/>
</dbReference>
<dbReference type="PDBsum" id="7SGS"/>
<dbReference type="EMDB" id="EMD-19043"/>
<dbReference type="EMDB" id="EMD-19044"/>
<dbReference type="EMDB" id="EMD-25120"/>
<dbReference type="SMR" id="Q14244"/>
<dbReference type="BioGRID" id="114515">
    <property type="interactions" value="280"/>
</dbReference>
<dbReference type="FunCoup" id="Q14244">
    <property type="interactions" value="1058"/>
</dbReference>
<dbReference type="IntAct" id="Q14244">
    <property type="interactions" value="184"/>
</dbReference>
<dbReference type="MINT" id="Q14244"/>
<dbReference type="STRING" id="9606.ENSP00000482335"/>
<dbReference type="GlyGen" id="Q14244">
    <property type="glycosylation" value="3 sites, 1 N-linked glycan (1 site), 1 O-linked glycan (1 site)"/>
</dbReference>
<dbReference type="iPTMnet" id="Q14244"/>
<dbReference type="PhosphoSitePlus" id="Q14244"/>
<dbReference type="BioMuta" id="MAP7"/>
<dbReference type="DMDM" id="74739817"/>
<dbReference type="jPOST" id="Q14244"/>
<dbReference type="MassIVE" id="Q14244"/>
<dbReference type="PaxDb" id="9606-ENSP00000482335"/>
<dbReference type="PeptideAtlas" id="Q14244"/>
<dbReference type="ProteomicsDB" id="19484"/>
<dbReference type="ProteomicsDB" id="25627"/>
<dbReference type="ProteomicsDB" id="59940">
    <molecule id="Q14244-1"/>
</dbReference>
<dbReference type="ProteomicsDB" id="59941">
    <molecule id="Q14244-2"/>
</dbReference>
<dbReference type="ProteomicsDB" id="59942">
    <molecule id="Q14244-3"/>
</dbReference>
<dbReference type="ProteomicsDB" id="59943">
    <molecule id="Q14244-4"/>
</dbReference>
<dbReference type="ProteomicsDB" id="59944">
    <molecule id="Q14244-5"/>
</dbReference>
<dbReference type="Pumba" id="Q14244"/>
<dbReference type="Antibodypedia" id="33011">
    <property type="antibodies" value="153 antibodies from 24 providers"/>
</dbReference>
<dbReference type="DNASU" id="9053"/>
<dbReference type="Ensembl" id="ENST00000354570.8">
    <molecule id="Q14244-1"/>
    <property type="protein sequence ID" value="ENSP00000346581.2"/>
    <property type="gene ID" value="ENSG00000135525.19"/>
</dbReference>
<dbReference type="Ensembl" id="ENST00000432797.6">
    <molecule id="Q14244-5"/>
    <property type="protein sequence ID" value="ENSP00000414879.2"/>
    <property type="gene ID" value="ENSG00000135525.19"/>
</dbReference>
<dbReference type="Ensembl" id="ENST00000438100.6">
    <molecule id="Q14244-4"/>
    <property type="protein sequence ID" value="ENSP00000400790.2"/>
    <property type="gene ID" value="ENSG00000135525.19"/>
</dbReference>
<dbReference type="Ensembl" id="ENST00000454590.5">
    <molecule id="Q14244-7"/>
    <property type="protein sequence ID" value="ENSP00000414712.1"/>
    <property type="gene ID" value="ENSG00000135525.19"/>
</dbReference>
<dbReference type="Ensembl" id="ENST00000544465.5">
    <molecule id="Q14244-6"/>
    <property type="protein sequence ID" value="ENSP00000445737.1"/>
    <property type="gene ID" value="ENSG00000135525.19"/>
</dbReference>
<dbReference type="Ensembl" id="ENST00000611373.1">
    <molecule id="Q14244-5"/>
    <property type="protein sequence ID" value="ENSP00000482998.1"/>
    <property type="gene ID" value="ENSG00000135525.19"/>
</dbReference>
<dbReference type="Ensembl" id="ENST00000616617.4">
    <molecule id="Q14244-3"/>
    <property type="protein sequence ID" value="ENSP00000483511.1"/>
    <property type="gene ID" value="ENSG00000135525.19"/>
</dbReference>
<dbReference type="Ensembl" id="ENST00000618822.4">
    <molecule id="Q14244-2"/>
    <property type="protein sequence ID" value="ENSP00000482356.1"/>
    <property type="gene ID" value="ENSG00000135525.19"/>
</dbReference>
<dbReference type="GeneID" id="9053"/>
<dbReference type="KEGG" id="hsa:9053"/>
<dbReference type="MANE-Select" id="ENST00000354570.8">
    <property type="protein sequence ID" value="ENSP00000346581.2"/>
    <property type="RefSeq nucleotide sequence ID" value="NM_003980.6"/>
    <property type="RefSeq protein sequence ID" value="NP_003971.1"/>
</dbReference>
<dbReference type="UCSC" id="uc003qgz.4">
    <molecule id="Q14244-1"/>
    <property type="organism name" value="human"/>
</dbReference>
<dbReference type="AGR" id="HGNC:6869"/>
<dbReference type="CTD" id="9053"/>
<dbReference type="DisGeNET" id="9053"/>
<dbReference type="GeneCards" id="MAP7"/>
<dbReference type="HGNC" id="HGNC:6869">
    <property type="gene designation" value="MAP7"/>
</dbReference>
<dbReference type="HPA" id="ENSG00000135525">
    <property type="expression patterns" value="Tissue enhanced (brain)"/>
</dbReference>
<dbReference type="MalaCards" id="MAP7"/>
<dbReference type="MIM" id="604108">
    <property type="type" value="gene"/>
</dbReference>
<dbReference type="neXtProt" id="NX_Q14244"/>
<dbReference type="OpenTargets" id="ENSG00000135525"/>
<dbReference type="PharmGKB" id="PA30615"/>
<dbReference type="VEuPathDB" id="HostDB:ENSG00000135525"/>
<dbReference type="eggNOG" id="ENOG502QTDQ">
    <property type="taxonomic scope" value="Eukaryota"/>
</dbReference>
<dbReference type="GeneTree" id="ENSGT00950000182941"/>
<dbReference type="HOGENOM" id="CLU_017315_2_1_1"/>
<dbReference type="InParanoid" id="Q14244"/>
<dbReference type="OrthoDB" id="8948920at2759"/>
<dbReference type="PAN-GO" id="Q14244">
    <property type="GO annotations" value="2 GO annotations based on evolutionary models"/>
</dbReference>
<dbReference type="PhylomeDB" id="Q14244"/>
<dbReference type="TreeFam" id="TF332273"/>
<dbReference type="PathwayCommons" id="Q14244"/>
<dbReference type="SignaLink" id="Q14244"/>
<dbReference type="BioGRID-ORCS" id="9053">
    <property type="hits" value="14 hits in 1155 CRISPR screens"/>
</dbReference>
<dbReference type="ChiTaRS" id="MAP7">
    <property type="organism name" value="human"/>
</dbReference>
<dbReference type="GeneWiki" id="MAP7"/>
<dbReference type="GenomeRNAi" id="9053"/>
<dbReference type="Pharos" id="Q14244">
    <property type="development level" value="Tbio"/>
</dbReference>
<dbReference type="PRO" id="PR:Q14244"/>
<dbReference type="Proteomes" id="UP000005640">
    <property type="component" value="Chromosome 6"/>
</dbReference>
<dbReference type="RNAct" id="Q14244">
    <property type="molecule type" value="protein"/>
</dbReference>
<dbReference type="Bgee" id="ENSG00000135525">
    <property type="expression patterns" value="Expressed in endothelial cell and 188 other cell types or tissues"/>
</dbReference>
<dbReference type="ExpressionAtlas" id="Q14244">
    <property type="expression patterns" value="baseline and differential"/>
</dbReference>
<dbReference type="GO" id="GO:0030424">
    <property type="term" value="C:axon"/>
    <property type="evidence" value="ECO:0000250"/>
    <property type="project" value="ARUK-UCL"/>
</dbReference>
<dbReference type="GO" id="GO:0016323">
    <property type="term" value="C:basolateral plasma membrane"/>
    <property type="evidence" value="ECO:0007669"/>
    <property type="project" value="UniProtKB-SubCell"/>
</dbReference>
<dbReference type="GO" id="GO:0005829">
    <property type="term" value="C:cytosol"/>
    <property type="evidence" value="ECO:0000314"/>
    <property type="project" value="HPA"/>
</dbReference>
<dbReference type="GO" id="GO:0005874">
    <property type="term" value="C:microtubule"/>
    <property type="evidence" value="ECO:0007669"/>
    <property type="project" value="UniProtKB-KW"/>
</dbReference>
<dbReference type="GO" id="GO:0005875">
    <property type="term" value="C:microtubule associated complex"/>
    <property type="evidence" value="ECO:0000304"/>
    <property type="project" value="ProtInc"/>
</dbReference>
<dbReference type="GO" id="GO:0015630">
    <property type="term" value="C:microtubule cytoskeleton"/>
    <property type="evidence" value="ECO:0000314"/>
    <property type="project" value="HPA"/>
</dbReference>
<dbReference type="GO" id="GO:0048471">
    <property type="term" value="C:perinuclear region of cytoplasm"/>
    <property type="evidence" value="ECO:0007669"/>
    <property type="project" value="UniProtKB-SubCell"/>
</dbReference>
<dbReference type="GO" id="GO:0005102">
    <property type="term" value="F:signaling receptor binding"/>
    <property type="evidence" value="ECO:0000250"/>
    <property type="project" value="BHF-UCL"/>
</dbReference>
<dbReference type="GO" id="GO:0005198">
    <property type="term" value="F:structural molecule activity"/>
    <property type="evidence" value="ECO:0000304"/>
    <property type="project" value="ProtInc"/>
</dbReference>
<dbReference type="GO" id="GO:0007163">
    <property type="term" value="P:establishment or maintenance of cell polarity"/>
    <property type="evidence" value="ECO:0000304"/>
    <property type="project" value="ProtInc"/>
</dbReference>
<dbReference type="GO" id="GO:0000226">
    <property type="term" value="P:microtubule cytoskeleton organization"/>
    <property type="evidence" value="ECO:0000318"/>
    <property type="project" value="GO_Central"/>
</dbReference>
<dbReference type="GO" id="GO:0072659">
    <property type="term" value="P:protein localization to plasma membrane"/>
    <property type="evidence" value="ECO:0000250"/>
    <property type="project" value="BHF-UCL"/>
</dbReference>
<dbReference type="GO" id="GO:0006970">
    <property type="term" value="P:response to osmotic stress"/>
    <property type="evidence" value="ECO:0000250"/>
    <property type="project" value="BHF-UCL"/>
</dbReference>
<dbReference type="InterPro" id="IPR051483">
    <property type="entry name" value="MAP7_domain-containing"/>
</dbReference>
<dbReference type="InterPro" id="IPR008604">
    <property type="entry name" value="MAP7_fam"/>
</dbReference>
<dbReference type="PANTHER" id="PTHR15073:SF4">
    <property type="entry name" value="ENSCONSIN"/>
    <property type="match status" value="1"/>
</dbReference>
<dbReference type="PANTHER" id="PTHR15073">
    <property type="entry name" value="MICROTUBULE-ASSOCIATED PROTEIN"/>
    <property type="match status" value="1"/>
</dbReference>
<dbReference type="Pfam" id="PF05672">
    <property type="entry name" value="MAP7"/>
    <property type="match status" value="1"/>
</dbReference>
<keyword id="KW-0002">3D-structure</keyword>
<keyword id="KW-0007">Acetylation</keyword>
<keyword id="KW-0025">Alternative splicing</keyword>
<keyword id="KW-1003">Cell membrane</keyword>
<keyword id="KW-0175">Coiled coil</keyword>
<keyword id="KW-0963">Cytoplasm</keyword>
<keyword id="KW-0206">Cytoskeleton</keyword>
<keyword id="KW-1017">Isopeptide bond</keyword>
<keyword id="KW-0472">Membrane</keyword>
<keyword id="KW-0493">Microtubule</keyword>
<keyword id="KW-0597">Phosphoprotein</keyword>
<keyword id="KW-1267">Proteomics identification</keyword>
<keyword id="KW-1185">Reference proteome</keyword>
<keyword id="KW-0832">Ubl conjugation</keyword>
<gene>
    <name type="primary">MAP7</name>
</gene>
<proteinExistence type="evidence at protein level"/>
<comment type="function">
    <text evidence="4 8 9">Microtubule-stabilizing protein that may play an important role during reorganization of microtubules during polarization and differentiation of epithelial cells. Associates with microtubules in a dynamic manner. May play a role in the formation of intercellular contacts. Colocalization with TRPV4 results in the redistribution of TRPV4 toward the membrane and may link cytoskeletal microfilaments.</text>
</comment>
<comment type="subunit">
    <text evidence="1">Interacts with TRPV4.</text>
</comment>
<comment type="interaction">
    <interactant intactId="EBI-2211064">
        <id>Q14244</id>
    </interactant>
    <interactant intactId="EBI-6873045">
        <id>Q6NSX1</id>
        <label>CCDC70</label>
    </interactant>
    <organismsDiffer>false</organismsDiffer>
    <experiments>3</experiments>
</comment>
<comment type="interaction">
    <interactant intactId="EBI-2211064">
        <id>Q14244</id>
    </interactant>
    <interactant intactId="EBI-5655540">
        <id>Q8N3C7</id>
        <label>CLIP4</label>
    </interactant>
    <organismsDiffer>false</organismsDiffer>
    <experiments>3</experiments>
</comment>
<comment type="interaction">
    <interactant intactId="EBI-2211064">
        <id>Q14244</id>
    </interactant>
    <interactant intactId="EBI-10265237">
        <id>Q8NC26</id>
        <label>ZNF114</label>
    </interactant>
    <organismsDiffer>false</organismsDiffer>
    <experiments>3</experiments>
</comment>
<comment type="interaction">
    <interactant intactId="EBI-2211064">
        <id>Q14244</id>
    </interactant>
    <interactant intactId="EBI-13951059">
        <id>A0A0H3JP21</id>
        <label>espL2</label>
    </interactant>
    <organismsDiffer>true</organismsDiffer>
    <experiments>4</experiments>
</comment>
<comment type="interaction">
    <interactant intactId="EBI-2211064">
        <id>Q14244</id>
    </interactant>
    <interactant intactId="EBI-10039153">
        <id>Q8XBX8</id>
        <label>nleB1</label>
    </interactant>
    <organismsDiffer>true</organismsDiffer>
    <experiments>4</experiments>
</comment>
<comment type="subcellular location">
    <subcellularLocation>
        <location>Cytoplasm</location>
        <location>Perinuclear region</location>
    </subcellularLocation>
    <subcellularLocation>
        <location>Basolateral cell membrane</location>
    </subcellularLocation>
    <subcellularLocation>
        <location>Cytoplasm</location>
        <location>Cytoskeleton</location>
    </subcellularLocation>
    <text>Colocalized on microtubules. An intracellular redistribution is triggered during induction of keratinocyte terminal differentiation from microtubules with a perinuclear localization to cortical microtubules organized in spike-like bundles facing intercellular contacts.</text>
</comment>
<comment type="alternative products">
    <event type="alternative splicing"/>
    <isoform>
        <id>Q14244-1</id>
        <name>1</name>
        <sequence type="displayed"/>
    </isoform>
    <isoform>
        <id>Q14244-2</id>
        <name>2</name>
        <name>E-MAP-115-105</name>
        <sequence type="described" ref="VSP_021317"/>
    </isoform>
    <isoform>
        <id>Q14244-3</id>
        <name>3</name>
        <name>E-MAP-115-95</name>
        <sequence type="described" ref="VSP_021316"/>
    </isoform>
    <isoform>
        <id>Q14244-4</id>
        <name>4</name>
        <sequence type="described" ref="VSP_043336 VSP_021317"/>
    </isoform>
    <isoform>
        <id>Q14244-5</id>
        <name>5</name>
        <sequence type="described" ref="VSP_043335"/>
    </isoform>
    <isoform>
        <id>Q14244-6</id>
        <name>6</name>
        <sequence type="described" ref="VSP_046758"/>
    </isoform>
    <isoform>
        <id>Q14244-7</id>
        <name>7</name>
        <sequence type="described" ref="VSP_043336"/>
    </isoform>
</comment>
<comment type="tissue specificity">
    <text evidence="8 9">Expressed in the skin and cells of epithelial origin. Predominantly expressed in the suprabasal layers of the normal epidermis and relatively abundant in squamous cell carcinomas but barely detectable in basal cell carcinomas.</text>
</comment>
<comment type="induction">
    <text>Up-regulated upon terminal differentiation of primary keratinocytes.</text>
</comment>
<comment type="PTM">
    <text evidence="7">The association with microtubules is regulated by phosphorylation during the cell cycle. During interphase only phosphorylated on serine. Phosphorylated on threonine in mitosis.</text>
</comment>
<comment type="similarity">
    <text evidence="12">Belongs to the MAP7 family.</text>
</comment>
<feature type="initiator methionine" description="Removed" evidence="18">
    <location>
        <position position="1"/>
    </location>
</feature>
<feature type="chain" id="PRO_0000255949" description="Ensconsin">
    <location>
        <begin position="2"/>
        <end position="749"/>
    </location>
</feature>
<feature type="region of interest" description="Disordered" evidence="3">
    <location>
        <begin position="1"/>
        <end position="91"/>
    </location>
</feature>
<feature type="region of interest" description="Disordered" evidence="3">
    <location>
        <begin position="104"/>
        <end position="180"/>
    </location>
</feature>
<feature type="region of interest" description="Disordered" evidence="3">
    <location>
        <begin position="307"/>
        <end position="688"/>
    </location>
</feature>
<feature type="region of interest" description="Disordered" evidence="3">
    <location>
        <begin position="702"/>
        <end position="723"/>
    </location>
</feature>
<feature type="coiled-coil region" evidence="2">
    <location>
        <begin position="89"/>
        <end position="152"/>
    </location>
</feature>
<feature type="coiled-coil region" evidence="2">
    <location>
        <begin position="477"/>
        <end position="612"/>
    </location>
</feature>
<feature type="compositionally biased region" description="Polar residues" evidence="3">
    <location>
        <begin position="36"/>
        <end position="52"/>
    </location>
</feature>
<feature type="compositionally biased region" description="Basic and acidic residues" evidence="3">
    <location>
        <begin position="62"/>
        <end position="91"/>
    </location>
</feature>
<feature type="compositionally biased region" description="Basic and acidic residues" evidence="3">
    <location>
        <begin position="104"/>
        <end position="151"/>
    </location>
</feature>
<feature type="compositionally biased region" description="Polar residues" evidence="3">
    <location>
        <begin position="307"/>
        <end position="320"/>
    </location>
</feature>
<feature type="compositionally biased region" description="Basic and acidic residues" evidence="3">
    <location>
        <begin position="372"/>
        <end position="390"/>
    </location>
</feature>
<feature type="compositionally biased region" description="Basic and acidic residues" evidence="3">
    <location>
        <begin position="406"/>
        <end position="418"/>
    </location>
</feature>
<feature type="compositionally biased region" description="Low complexity" evidence="3">
    <location>
        <begin position="424"/>
        <end position="433"/>
    </location>
</feature>
<feature type="compositionally biased region" description="Pro residues" evidence="3">
    <location>
        <begin position="434"/>
        <end position="450"/>
    </location>
</feature>
<feature type="compositionally biased region" description="Low complexity" evidence="3">
    <location>
        <begin position="451"/>
        <end position="460"/>
    </location>
</feature>
<feature type="compositionally biased region" description="Polar residues" evidence="3">
    <location>
        <begin position="461"/>
        <end position="473"/>
    </location>
</feature>
<feature type="compositionally biased region" description="Basic and acidic residues" evidence="3">
    <location>
        <begin position="478"/>
        <end position="627"/>
    </location>
</feature>
<feature type="compositionally biased region" description="Polar residues" evidence="3">
    <location>
        <begin position="660"/>
        <end position="672"/>
    </location>
</feature>
<feature type="modified residue" description="N-acetylalanine" evidence="18">
    <location>
        <position position="2"/>
    </location>
</feature>
<feature type="modified residue" description="Phosphoserine" evidence="21">
    <location>
        <position position="161"/>
    </location>
</feature>
<feature type="modified residue" description="Phosphoserine" evidence="21">
    <location>
        <position position="165"/>
    </location>
</feature>
<feature type="modified residue" description="Phosphoserine" evidence="20 21">
    <location>
        <position position="183"/>
    </location>
</feature>
<feature type="modified residue" description="Phosphoserine" evidence="21">
    <location>
        <position position="200"/>
    </location>
</feature>
<feature type="modified residue" description="Phosphoserine" evidence="21">
    <location>
        <position position="202"/>
    </location>
</feature>
<feature type="modified residue" description="Phosphoserine" evidence="13 15 16 17 19 21">
    <location>
        <position position="209"/>
    </location>
</feature>
<feature type="modified residue" description="Phosphoserine" evidence="13 14 15 16 19 21">
    <location>
        <position position="219"/>
    </location>
</feature>
<feature type="modified residue" description="Phosphothreonine" evidence="16 21">
    <location>
        <position position="231"/>
    </location>
</feature>
<feature type="modified residue" description="Phosphoserine" evidence="22">
    <location>
        <position position="235"/>
    </location>
</feature>
<feature type="modified residue" description="Phosphoserine" evidence="13 16">
    <location>
        <position position="254"/>
    </location>
</feature>
<feature type="modified residue" description="Phosphothreonine" evidence="13 16 19 21">
    <location>
        <position position="277"/>
    </location>
</feature>
<feature type="modified residue" description="Phosphoserine" evidence="21">
    <location>
        <position position="282"/>
    </location>
</feature>
<feature type="modified residue" description="Phosphoserine" evidence="21">
    <location>
        <position position="335"/>
    </location>
</feature>
<feature type="modified residue" description="Phosphoserine" evidence="21 22">
    <location>
        <position position="365"/>
    </location>
</feature>
<feature type="modified residue" description="Phosphothreonine" evidence="19">
    <location>
        <position position="673"/>
    </location>
</feature>
<feature type="cross-link" description="Glycyl lysine isopeptide (Lys-Gly) (interchain with G-Cter in SUMO2)" evidence="26">
    <location>
        <position position="273"/>
    </location>
</feature>
<feature type="cross-link" description="Glycyl lysine isopeptide (Lys-Gly) (interchain with G-Cter in SUMO2)" evidence="26">
    <location>
        <position position="295"/>
    </location>
</feature>
<feature type="cross-link" description="Glycyl lysine isopeptide (Lys-Gly) (interchain with G-Cter in SUMO2)" evidence="26">
    <location>
        <position position="373"/>
    </location>
</feature>
<feature type="cross-link" description="Glycyl lysine isopeptide (Lys-Gly) (interchain with G-Cter in SUMO2)" evidence="26">
    <location>
        <position position="377"/>
    </location>
</feature>
<feature type="cross-link" description="Glycyl lysine isopeptide (Lys-Gly) (interchain with G-Cter in SUMO2)" evidence="23 24 25 26">
    <location>
        <position position="406"/>
    </location>
</feature>
<feature type="splice variant" id="VSP_043335" description="In isoform 5." evidence="10">
    <location>
        <begin position="1"/>
        <end position="146"/>
    </location>
</feature>
<feature type="splice variant" id="VSP_046758" description="In isoform 6." evidence="10">
    <original>MAELGAGGDGHRGGDGAVRSETA</original>
    <variation>MEDTKLYS</variation>
    <location>
        <begin position="1"/>
        <end position="23"/>
    </location>
</feature>
<feature type="splice variant" id="VSP_043336" description="In isoform 4 and isoform 7." evidence="10">
    <original>MAELGAGGDGHRGGDGAVRSET</original>
    <variation>MPGSATALRHERLKKTNARPIPLGLFTINEEDEQQKNGNSRRPK</variation>
    <location>
        <begin position="1"/>
        <end position="22"/>
    </location>
</feature>
<feature type="splice variant" id="VSP_021316" description="In isoform 3." evidence="11">
    <location>
        <begin position="82"/>
        <end position="175"/>
    </location>
</feature>
<feature type="splice variant" id="VSP_021317" description="In isoform 2 and isoform 4." evidence="10 11">
    <location>
        <begin position="176"/>
        <end position="212"/>
    </location>
</feature>
<feature type="sequence variant" id="VAR_034091" description="In dbSNP:rs35350783.">
    <original>V</original>
    <variation>I</variation>
    <location>
        <position position="361"/>
    </location>
</feature>
<feature type="sequence variant" id="VAR_034092" description="In dbSNP:rs35107962.">
    <original>R</original>
    <variation>P</variation>
    <location>
        <position position="526"/>
    </location>
</feature>
<feature type="sequence variant" id="VAR_028880" description="In dbSNP:rs2076190." evidence="5 6">
    <original>R</original>
    <variation>W</variation>
    <location>
        <position position="558"/>
    </location>
</feature>
<feature type="sequence conflict" description="In Ref. 3; BAH13013." evidence="12" ref="3">
    <original>N</original>
    <variation>D</variation>
    <location>
        <position position="318"/>
    </location>
</feature>
<feature type="sequence conflict" description="In Ref. 3; BAH12386." evidence="12" ref="3">
    <original>Q</original>
    <variation>R</variation>
    <location>
        <position position="583"/>
    </location>
</feature>
<feature type="sequence conflict" description="In Ref. 3; BAH13013." evidence="12" ref="3">
    <original>F</original>
    <variation>S</variation>
    <location>
        <position position="725"/>
    </location>
</feature>
<feature type="helix" evidence="27">
    <location>
        <begin position="88"/>
        <end position="138"/>
    </location>
</feature>
<reference key="1">
    <citation type="journal article" date="1993" name="J. Cell Biol.">
        <title>Identification and molecular characterization of E-MAP-115, a novel microtubule-associated protein predominantly expressed in epithelial cells.</title>
        <authorList>
            <person name="Masson D."/>
            <person name="Kreis T.E."/>
        </authorList>
    </citation>
    <scope>NUCLEOTIDE SEQUENCE [MRNA] (ISOFORM 1)</scope>
    <scope>FUNCTION</scope>
    <scope>TISSUE SPECIFICITY</scope>
    <scope>SUBCELLULAR LOCATION</scope>
</reference>
<reference key="2">
    <citation type="submission" date="1999-05" db="EMBL/GenBank/DDBJ databases">
        <title>Novel features of E-MAP-115 revealed by the characterization of its variants E-MAP-115/105 and E-MAP-115/95.</title>
        <authorList>
            <person name="Fabre-Jonca N."/>
            <person name="Masson D."/>
        </authorList>
    </citation>
    <scope>NUCLEOTIDE SEQUENCE [MRNA] (ISOFORMS 2 AND 3)</scope>
</reference>
<reference key="3">
    <citation type="journal article" date="2004" name="Nat. Genet.">
        <title>Complete sequencing and characterization of 21,243 full-length human cDNAs.</title>
        <authorList>
            <person name="Ota T."/>
            <person name="Suzuki Y."/>
            <person name="Nishikawa T."/>
            <person name="Otsuki T."/>
            <person name="Sugiyama T."/>
            <person name="Irie R."/>
            <person name="Wakamatsu A."/>
            <person name="Hayashi K."/>
            <person name="Sato H."/>
            <person name="Nagai K."/>
            <person name="Kimura K."/>
            <person name="Makita H."/>
            <person name="Sekine M."/>
            <person name="Obayashi M."/>
            <person name="Nishi T."/>
            <person name="Shibahara T."/>
            <person name="Tanaka T."/>
            <person name="Ishii S."/>
            <person name="Yamamoto J."/>
            <person name="Saito K."/>
            <person name="Kawai Y."/>
            <person name="Isono Y."/>
            <person name="Nakamura Y."/>
            <person name="Nagahari K."/>
            <person name="Murakami K."/>
            <person name="Yasuda T."/>
            <person name="Iwayanagi T."/>
            <person name="Wagatsuma M."/>
            <person name="Shiratori A."/>
            <person name="Sudo H."/>
            <person name="Hosoiri T."/>
            <person name="Kaku Y."/>
            <person name="Kodaira H."/>
            <person name="Kondo H."/>
            <person name="Sugawara M."/>
            <person name="Takahashi M."/>
            <person name="Kanda K."/>
            <person name="Yokoi T."/>
            <person name="Furuya T."/>
            <person name="Kikkawa E."/>
            <person name="Omura Y."/>
            <person name="Abe K."/>
            <person name="Kamihara K."/>
            <person name="Katsuta N."/>
            <person name="Sato K."/>
            <person name="Tanikawa M."/>
            <person name="Yamazaki M."/>
            <person name="Ninomiya K."/>
            <person name="Ishibashi T."/>
            <person name="Yamashita H."/>
            <person name="Murakawa K."/>
            <person name="Fujimori K."/>
            <person name="Tanai H."/>
            <person name="Kimata M."/>
            <person name="Watanabe M."/>
            <person name="Hiraoka S."/>
            <person name="Chiba Y."/>
            <person name="Ishida S."/>
            <person name="Ono Y."/>
            <person name="Takiguchi S."/>
            <person name="Watanabe S."/>
            <person name="Yosida M."/>
            <person name="Hotuta T."/>
            <person name="Kusano J."/>
            <person name="Kanehori K."/>
            <person name="Takahashi-Fujii A."/>
            <person name="Hara H."/>
            <person name="Tanase T.-O."/>
            <person name="Nomura Y."/>
            <person name="Togiya S."/>
            <person name="Komai F."/>
            <person name="Hara R."/>
            <person name="Takeuchi K."/>
            <person name="Arita M."/>
            <person name="Imose N."/>
            <person name="Musashino K."/>
            <person name="Yuuki H."/>
            <person name="Oshima A."/>
            <person name="Sasaki N."/>
            <person name="Aotsuka S."/>
            <person name="Yoshikawa Y."/>
            <person name="Matsunawa H."/>
            <person name="Ichihara T."/>
            <person name="Shiohata N."/>
            <person name="Sano S."/>
            <person name="Moriya S."/>
            <person name="Momiyama H."/>
            <person name="Satoh N."/>
            <person name="Takami S."/>
            <person name="Terashima Y."/>
            <person name="Suzuki O."/>
            <person name="Nakagawa S."/>
            <person name="Senoh A."/>
            <person name="Mizoguchi H."/>
            <person name="Goto Y."/>
            <person name="Shimizu F."/>
            <person name="Wakebe H."/>
            <person name="Hishigaki H."/>
            <person name="Watanabe T."/>
            <person name="Sugiyama A."/>
            <person name="Takemoto M."/>
            <person name="Kawakami B."/>
            <person name="Yamazaki M."/>
            <person name="Watanabe K."/>
            <person name="Kumagai A."/>
            <person name="Itakura S."/>
            <person name="Fukuzumi Y."/>
            <person name="Fujimori Y."/>
            <person name="Komiyama M."/>
            <person name="Tashiro H."/>
            <person name="Tanigami A."/>
            <person name="Fujiwara T."/>
            <person name="Ono T."/>
            <person name="Yamada K."/>
            <person name="Fujii Y."/>
            <person name="Ozaki K."/>
            <person name="Hirao M."/>
            <person name="Ohmori Y."/>
            <person name="Kawabata A."/>
            <person name="Hikiji T."/>
            <person name="Kobatake N."/>
            <person name="Inagaki H."/>
            <person name="Ikema Y."/>
            <person name="Okamoto S."/>
            <person name="Okitani R."/>
            <person name="Kawakami T."/>
            <person name="Noguchi S."/>
            <person name="Itoh T."/>
            <person name="Shigeta K."/>
            <person name="Senba T."/>
            <person name="Matsumura K."/>
            <person name="Nakajima Y."/>
            <person name="Mizuno T."/>
            <person name="Morinaga M."/>
            <person name="Sasaki M."/>
            <person name="Togashi T."/>
            <person name="Oyama M."/>
            <person name="Hata H."/>
            <person name="Watanabe M."/>
            <person name="Komatsu T."/>
            <person name="Mizushima-Sugano J."/>
            <person name="Satoh T."/>
            <person name="Shirai Y."/>
            <person name="Takahashi Y."/>
            <person name="Nakagawa K."/>
            <person name="Okumura K."/>
            <person name="Nagase T."/>
            <person name="Nomura N."/>
            <person name="Kikuchi H."/>
            <person name="Masuho Y."/>
            <person name="Yamashita R."/>
            <person name="Nakai K."/>
            <person name="Yada T."/>
            <person name="Nakamura Y."/>
            <person name="Ohara O."/>
            <person name="Isogai T."/>
            <person name="Sugano S."/>
        </authorList>
    </citation>
    <scope>NUCLEOTIDE SEQUENCE [LARGE SCALE MRNA] (ISOFORMS 4; 5; 6 AND 7)</scope>
    <scope>VARIANT TRP-558</scope>
    <source>
        <tissue>Amygdala</tissue>
        <tissue>Hippocampus</tissue>
        <tissue>Thalamus</tissue>
    </source>
</reference>
<reference key="4">
    <citation type="journal article" date="2003" name="Nature">
        <title>The DNA sequence and analysis of human chromosome 6.</title>
        <authorList>
            <person name="Mungall A.J."/>
            <person name="Palmer S.A."/>
            <person name="Sims S.K."/>
            <person name="Edwards C.A."/>
            <person name="Ashurst J.L."/>
            <person name="Wilming L."/>
            <person name="Jones M.C."/>
            <person name="Horton R."/>
            <person name="Hunt S.E."/>
            <person name="Scott C.E."/>
            <person name="Gilbert J.G.R."/>
            <person name="Clamp M.E."/>
            <person name="Bethel G."/>
            <person name="Milne S."/>
            <person name="Ainscough R."/>
            <person name="Almeida J.P."/>
            <person name="Ambrose K.D."/>
            <person name="Andrews T.D."/>
            <person name="Ashwell R.I.S."/>
            <person name="Babbage A.K."/>
            <person name="Bagguley C.L."/>
            <person name="Bailey J."/>
            <person name="Banerjee R."/>
            <person name="Barker D.J."/>
            <person name="Barlow K.F."/>
            <person name="Bates K."/>
            <person name="Beare D.M."/>
            <person name="Beasley H."/>
            <person name="Beasley O."/>
            <person name="Bird C.P."/>
            <person name="Blakey S.E."/>
            <person name="Bray-Allen S."/>
            <person name="Brook J."/>
            <person name="Brown A.J."/>
            <person name="Brown J.Y."/>
            <person name="Burford D.C."/>
            <person name="Burrill W."/>
            <person name="Burton J."/>
            <person name="Carder C."/>
            <person name="Carter N.P."/>
            <person name="Chapman J.C."/>
            <person name="Clark S.Y."/>
            <person name="Clark G."/>
            <person name="Clee C.M."/>
            <person name="Clegg S."/>
            <person name="Cobley V."/>
            <person name="Collier R.E."/>
            <person name="Collins J.E."/>
            <person name="Colman L.K."/>
            <person name="Corby N.R."/>
            <person name="Coville G.J."/>
            <person name="Culley K.M."/>
            <person name="Dhami P."/>
            <person name="Davies J."/>
            <person name="Dunn M."/>
            <person name="Earthrowl M.E."/>
            <person name="Ellington A.E."/>
            <person name="Evans K.A."/>
            <person name="Faulkner L."/>
            <person name="Francis M.D."/>
            <person name="Frankish A."/>
            <person name="Frankland J."/>
            <person name="French L."/>
            <person name="Garner P."/>
            <person name="Garnett J."/>
            <person name="Ghori M.J."/>
            <person name="Gilby L.M."/>
            <person name="Gillson C.J."/>
            <person name="Glithero R.J."/>
            <person name="Grafham D.V."/>
            <person name="Grant M."/>
            <person name="Gribble S."/>
            <person name="Griffiths C."/>
            <person name="Griffiths M.N.D."/>
            <person name="Hall R."/>
            <person name="Halls K.S."/>
            <person name="Hammond S."/>
            <person name="Harley J.L."/>
            <person name="Hart E.A."/>
            <person name="Heath P.D."/>
            <person name="Heathcott R."/>
            <person name="Holmes S.J."/>
            <person name="Howden P.J."/>
            <person name="Howe K.L."/>
            <person name="Howell G.R."/>
            <person name="Huckle E."/>
            <person name="Humphray S.J."/>
            <person name="Humphries M.D."/>
            <person name="Hunt A.R."/>
            <person name="Johnson C.M."/>
            <person name="Joy A.A."/>
            <person name="Kay M."/>
            <person name="Keenan S.J."/>
            <person name="Kimberley A.M."/>
            <person name="King A."/>
            <person name="Laird G.K."/>
            <person name="Langford C."/>
            <person name="Lawlor S."/>
            <person name="Leongamornlert D.A."/>
            <person name="Leversha M."/>
            <person name="Lloyd C.R."/>
            <person name="Lloyd D.M."/>
            <person name="Loveland J.E."/>
            <person name="Lovell J."/>
            <person name="Martin S."/>
            <person name="Mashreghi-Mohammadi M."/>
            <person name="Maslen G.L."/>
            <person name="Matthews L."/>
            <person name="McCann O.T."/>
            <person name="McLaren S.J."/>
            <person name="McLay K."/>
            <person name="McMurray A."/>
            <person name="Moore M.J.F."/>
            <person name="Mullikin J.C."/>
            <person name="Niblett D."/>
            <person name="Nickerson T."/>
            <person name="Novik K.L."/>
            <person name="Oliver K."/>
            <person name="Overton-Larty E.K."/>
            <person name="Parker A."/>
            <person name="Patel R."/>
            <person name="Pearce A.V."/>
            <person name="Peck A.I."/>
            <person name="Phillimore B.J.C.T."/>
            <person name="Phillips S."/>
            <person name="Plumb R.W."/>
            <person name="Porter K.M."/>
            <person name="Ramsey Y."/>
            <person name="Ranby S.A."/>
            <person name="Rice C.M."/>
            <person name="Ross M.T."/>
            <person name="Searle S.M."/>
            <person name="Sehra H.K."/>
            <person name="Sheridan E."/>
            <person name="Skuce C.D."/>
            <person name="Smith S."/>
            <person name="Smith M."/>
            <person name="Spraggon L."/>
            <person name="Squares S.L."/>
            <person name="Steward C.A."/>
            <person name="Sycamore N."/>
            <person name="Tamlyn-Hall G."/>
            <person name="Tester J."/>
            <person name="Theaker A.J."/>
            <person name="Thomas D.W."/>
            <person name="Thorpe A."/>
            <person name="Tracey A."/>
            <person name="Tromans A."/>
            <person name="Tubby B."/>
            <person name="Wall M."/>
            <person name="Wallis J.M."/>
            <person name="West A.P."/>
            <person name="White S.S."/>
            <person name="Whitehead S.L."/>
            <person name="Whittaker H."/>
            <person name="Wild A."/>
            <person name="Willey D.J."/>
            <person name="Wilmer T.E."/>
            <person name="Wood J.M."/>
            <person name="Wray P.W."/>
            <person name="Wyatt J.C."/>
            <person name="Young L."/>
            <person name="Younger R.M."/>
            <person name="Bentley D.R."/>
            <person name="Coulson A."/>
            <person name="Durbin R.M."/>
            <person name="Hubbard T."/>
            <person name="Sulston J.E."/>
            <person name="Dunham I."/>
            <person name="Rogers J."/>
            <person name="Beck S."/>
        </authorList>
    </citation>
    <scope>NUCLEOTIDE SEQUENCE [LARGE SCALE GENOMIC DNA]</scope>
</reference>
<reference key="5">
    <citation type="journal article" date="2004" name="Genome Res.">
        <title>The status, quality, and expansion of the NIH full-length cDNA project: the Mammalian Gene Collection (MGC).</title>
        <authorList>
            <consortium name="The MGC Project Team"/>
        </authorList>
    </citation>
    <scope>NUCLEOTIDE SEQUENCE [LARGE SCALE MRNA] (ISOFORM 1)</scope>
    <scope>VARIANT TRP-558</scope>
    <source>
        <tissue>Pancreas</tissue>
    </source>
</reference>
<reference key="6">
    <citation type="journal article" date="1995" name="J. Cell Biol.">
        <title>Binding of E-MAP-115 to microtubules is regulated by cell cycle-dependent phosphorylation.</title>
        <authorList>
            <person name="Masson D."/>
            <person name="Kreis T.E."/>
        </authorList>
    </citation>
    <scope>PHOSPHORYLATION</scope>
</reference>
<reference key="7">
    <citation type="journal article" date="1999" name="J. Invest. Dermatol.">
        <title>Upregulation and redistribution of E-MAP-115 (epithelial microtubule-associated protein of 115 kDa) in terminally differentiating keratinocytes is coincident with the formation of intercellular contacts.</title>
        <authorList>
            <person name="Fabre-Jonca N."/>
            <person name="Viard I."/>
            <person name="French L.E."/>
            <person name="Masson D."/>
        </authorList>
    </citation>
    <scope>FUNCTION</scope>
    <scope>SUBCELLULAR LOCATION</scope>
    <scope>TISSUE SPECIFICITY</scope>
</reference>
<reference key="8">
    <citation type="journal article" date="2001" name="J. Cell Sci.">
        <title>Rapid dynamics of the microtubule binding of ensconsin in vivo.</title>
        <authorList>
            <person name="Bulinski J.C."/>
            <person name="Odde D.J."/>
            <person name="Howell B.J."/>
            <person name="Salmon T.D."/>
            <person name="Waterman-Storer C.M."/>
        </authorList>
    </citation>
    <scope>FUNCTION</scope>
</reference>
<reference key="9">
    <citation type="journal article" date="2006" name="Nat. Biotechnol.">
        <title>A probability-based approach for high-throughput protein phosphorylation analysis and site localization.</title>
        <authorList>
            <person name="Beausoleil S.A."/>
            <person name="Villen J."/>
            <person name="Gerber S.A."/>
            <person name="Rush J."/>
            <person name="Gygi S.P."/>
        </authorList>
    </citation>
    <scope>PHOSPHORYLATION [LARGE SCALE ANALYSIS] AT SER-209; SER-219; SER-254 AND THR-277</scope>
    <scope>IDENTIFICATION BY MASS SPECTROMETRY [LARGE SCALE ANALYSIS]</scope>
    <source>
        <tissue>Cervix carcinoma</tissue>
    </source>
</reference>
<reference key="10">
    <citation type="journal article" date="2007" name="J. Proteome Res.">
        <title>Improved titanium dioxide enrichment of phosphopeptides from HeLa cells and high confident phosphopeptide identification by cross-validation of MS/MS and MS/MS/MS spectra.</title>
        <authorList>
            <person name="Yu L.R."/>
            <person name="Zhu Z."/>
            <person name="Chan K.C."/>
            <person name="Issaq H.J."/>
            <person name="Dimitrov D.S."/>
            <person name="Veenstra T.D."/>
        </authorList>
    </citation>
    <scope>PHOSPHORYLATION [LARGE SCALE ANALYSIS] AT SER-219</scope>
    <scope>IDENTIFICATION BY MASS SPECTROMETRY [LARGE SCALE ANALYSIS]</scope>
    <source>
        <tissue>Cervix carcinoma</tissue>
    </source>
</reference>
<reference key="11">
    <citation type="journal article" date="2008" name="J. Proteome Res.">
        <title>Combining protein-based IMAC, peptide-based IMAC, and MudPIT for efficient phosphoproteomic analysis.</title>
        <authorList>
            <person name="Cantin G.T."/>
            <person name="Yi W."/>
            <person name="Lu B."/>
            <person name="Park S.K."/>
            <person name="Xu T."/>
            <person name="Lee J.-D."/>
            <person name="Yates J.R. III"/>
        </authorList>
    </citation>
    <scope>PHOSPHORYLATION [LARGE SCALE ANALYSIS] AT SER-209 AND SER-219</scope>
    <scope>IDENTIFICATION BY MASS SPECTROMETRY [LARGE SCALE ANALYSIS]</scope>
    <source>
        <tissue>Cervix carcinoma</tissue>
    </source>
</reference>
<reference key="12">
    <citation type="journal article" date="2008" name="Mol. Cell">
        <title>Kinase-selective enrichment enables quantitative phosphoproteomics of the kinome across the cell cycle.</title>
        <authorList>
            <person name="Daub H."/>
            <person name="Olsen J.V."/>
            <person name="Bairlein M."/>
            <person name="Gnad F."/>
            <person name="Oppermann F.S."/>
            <person name="Korner R."/>
            <person name="Greff Z."/>
            <person name="Keri G."/>
            <person name="Stemmann O."/>
            <person name="Mann M."/>
        </authorList>
    </citation>
    <scope>PHOSPHORYLATION [LARGE SCALE ANALYSIS] AT SER-209</scope>
    <scope>IDENTIFICATION BY MASS SPECTROMETRY [LARGE SCALE ANALYSIS]</scope>
    <source>
        <tissue>Cervix carcinoma</tissue>
    </source>
</reference>
<reference key="13">
    <citation type="journal article" date="2008" name="Proc. Natl. Acad. Sci. U.S.A.">
        <title>A quantitative atlas of mitotic phosphorylation.</title>
        <authorList>
            <person name="Dephoure N."/>
            <person name="Zhou C."/>
            <person name="Villen J."/>
            <person name="Beausoleil S.A."/>
            <person name="Bakalarski C.E."/>
            <person name="Elledge S.J."/>
            <person name="Gygi S.P."/>
        </authorList>
    </citation>
    <scope>PHOSPHORYLATION [LARGE SCALE ANALYSIS] AT SER-209; SER-219; THR-231; SER-254 AND THR-277</scope>
    <scope>IDENTIFICATION BY MASS SPECTROMETRY [LARGE SCALE ANALYSIS]</scope>
    <source>
        <tissue>Cervix carcinoma</tissue>
    </source>
</reference>
<reference key="14">
    <citation type="journal article" date="2009" name="Anal. Chem.">
        <title>Lys-N and trypsin cover complementary parts of the phosphoproteome in a refined SCX-based approach.</title>
        <authorList>
            <person name="Gauci S."/>
            <person name="Helbig A.O."/>
            <person name="Slijper M."/>
            <person name="Krijgsveld J."/>
            <person name="Heck A.J."/>
            <person name="Mohammed S."/>
        </authorList>
    </citation>
    <scope>ACETYLATION [LARGE SCALE ANALYSIS] AT ALA-2</scope>
    <scope>CLEAVAGE OF INITIATOR METHIONINE [LARGE SCALE ANALYSIS]</scope>
    <scope>IDENTIFICATION BY MASS SPECTROMETRY [LARGE SCALE ANALYSIS]</scope>
</reference>
<reference key="15">
    <citation type="journal article" date="2010" name="Sci. Signal.">
        <title>Quantitative phosphoproteomics reveals widespread full phosphorylation site occupancy during mitosis.</title>
        <authorList>
            <person name="Olsen J.V."/>
            <person name="Vermeulen M."/>
            <person name="Santamaria A."/>
            <person name="Kumar C."/>
            <person name="Miller M.L."/>
            <person name="Jensen L.J."/>
            <person name="Gnad F."/>
            <person name="Cox J."/>
            <person name="Jensen T.S."/>
            <person name="Nigg E.A."/>
            <person name="Brunak S."/>
            <person name="Mann M."/>
        </authorList>
    </citation>
    <scope>PHOSPHORYLATION [LARGE SCALE ANALYSIS] AT SER-209; SER-219; THR-277 AND THR-673</scope>
    <scope>IDENTIFICATION BY MASS SPECTROMETRY [LARGE SCALE ANALYSIS]</scope>
    <source>
        <tissue>Cervix carcinoma</tissue>
    </source>
</reference>
<reference key="16">
    <citation type="journal article" date="2011" name="BMC Syst. Biol.">
        <title>Initial characterization of the human central proteome.</title>
        <authorList>
            <person name="Burkard T.R."/>
            <person name="Planyavsky M."/>
            <person name="Kaupe I."/>
            <person name="Breitwieser F.P."/>
            <person name="Buerckstuemmer T."/>
            <person name="Bennett K.L."/>
            <person name="Superti-Furga G."/>
            <person name="Colinge J."/>
        </authorList>
    </citation>
    <scope>IDENTIFICATION BY MASS SPECTROMETRY [LARGE SCALE ANALYSIS]</scope>
</reference>
<reference key="17">
    <citation type="journal article" date="2011" name="Sci. Signal.">
        <title>System-wide temporal characterization of the proteome and phosphoproteome of human embryonic stem cell differentiation.</title>
        <authorList>
            <person name="Rigbolt K.T."/>
            <person name="Prokhorova T.A."/>
            <person name="Akimov V."/>
            <person name="Henningsen J."/>
            <person name="Johansen P.T."/>
            <person name="Kratchmarova I."/>
            <person name="Kassem M."/>
            <person name="Mann M."/>
            <person name="Olsen J.V."/>
            <person name="Blagoev B."/>
        </authorList>
    </citation>
    <scope>PHOSPHORYLATION [LARGE SCALE ANALYSIS] AT SER-183</scope>
    <scope>IDENTIFICATION BY MASS SPECTROMETRY [LARGE SCALE ANALYSIS]</scope>
</reference>
<reference key="18">
    <citation type="journal article" date="2013" name="J. Proteome Res.">
        <title>Toward a comprehensive characterization of a human cancer cell phosphoproteome.</title>
        <authorList>
            <person name="Zhou H."/>
            <person name="Di Palma S."/>
            <person name="Preisinger C."/>
            <person name="Peng M."/>
            <person name="Polat A.N."/>
            <person name="Heck A.J."/>
            <person name="Mohammed S."/>
        </authorList>
    </citation>
    <scope>PHOSPHORYLATION [LARGE SCALE ANALYSIS] AT SER-161; SER-165; SER-183; SER-200; SER-202; SER-209; SER-219; THR-231; THR-277; SER-282; SER-335 AND SER-365</scope>
    <scope>IDENTIFICATION BY MASS SPECTROMETRY [LARGE SCALE ANALYSIS]</scope>
    <source>
        <tissue>Cervix carcinoma</tissue>
        <tissue>Erythroleukemia</tissue>
    </source>
</reference>
<reference key="19">
    <citation type="journal article" date="2014" name="J. Proteomics">
        <title>An enzyme assisted RP-RPLC approach for in-depth analysis of human liver phosphoproteome.</title>
        <authorList>
            <person name="Bian Y."/>
            <person name="Song C."/>
            <person name="Cheng K."/>
            <person name="Dong M."/>
            <person name="Wang F."/>
            <person name="Huang J."/>
            <person name="Sun D."/>
            <person name="Wang L."/>
            <person name="Ye M."/>
            <person name="Zou H."/>
        </authorList>
    </citation>
    <scope>PHOSPHORYLATION [LARGE SCALE ANALYSIS] AT SER-235 AND SER-365</scope>
    <scope>IDENTIFICATION BY MASS SPECTROMETRY [LARGE SCALE ANALYSIS]</scope>
    <source>
        <tissue>Liver</tissue>
    </source>
</reference>
<reference key="20">
    <citation type="journal article" date="2014" name="Nat. Struct. Mol. Biol.">
        <title>Uncovering global SUMOylation signaling networks in a site-specific manner.</title>
        <authorList>
            <person name="Hendriks I.A."/>
            <person name="D'Souza R.C."/>
            <person name="Yang B."/>
            <person name="Verlaan-de Vries M."/>
            <person name="Mann M."/>
            <person name="Vertegaal A.C."/>
        </authorList>
    </citation>
    <scope>SUMOYLATION [LARGE SCALE ANALYSIS] AT LYS-406</scope>
    <scope>IDENTIFICATION BY MASS SPECTROMETRY [LARGE SCALE ANALYSIS]</scope>
</reference>
<reference key="21">
    <citation type="journal article" date="2014" name="Proc. Natl. Acad. Sci. U.S.A.">
        <title>Mapping of SUMO sites and analysis of SUMOylation changes induced by external stimuli.</title>
        <authorList>
            <person name="Impens F."/>
            <person name="Radoshevich L."/>
            <person name="Cossart P."/>
            <person name="Ribet D."/>
        </authorList>
    </citation>
    <scope>SUMOYLATION [LARGE SCALE ANALYSIS] AT LYS-406</scope>
    <scope>IDENTIFICATION BY MASS SPECTROMETRY [LARGE SCALE ANALYSIS]</scope>
</reference>
<reference key="22">
    <citation type="journal article" date="2015" name="Cell Rep.">
        <title>SUMO-2 orchestrates chromatin modifiers in response to DNA damage.</title>
        <authorList>
            <person name="Hendriks I.A."/>
            <person name="Treffers L.W."/>
            <person name="Verlaan-de Vries M."/>
            <person name="Olsen J.V."/>
            <person name="Vertegaal A.C."/>
        </authorList>
    </citation>
    <scope>SUMOYLATION [LARGE SCALE ANALYSIS] AT LYS-406</scope>
    <scope>IDENTIFICATION BY MASS SPECTROMETRY [LARGE SCALE ANALYSIS]</scope>
</reference>
<reference key="23">
    <citation type="journal article" date="2017" name="Nat. Struct. Mol. Biol.">
        <title>Site-specific mapping of the human SUMO proteome reveals co-modification with phosphorylation.</title>
        <authorList>
            <person name="Hendriks I.A."/>
            <person name="Lyon D."/>
            <person name="Young C."/>
            <person name="Jensen L.J."/>
            <person name="Vertegaal A.C."/>
            <person name="Nielsen M.L."/>
        </authorList>
    </citation>
    <scope>SUMOYLATION [LARGE SCALE ANALYSIS] AT LYS-273; LYS-295; LYS-373; LYS-377 AND LYS-406</scope>
    <scope>IDENTIFICATION BY MASS SPECTROMETRY [LARGE SCALE ANALYSIS]</scope>
</reference>
<sequence length="749" mass="84052">MAELGAGGDGHRGGDGAVRSETAPDSYKVQDKKNASSRPASAISGQNNNHSGNKPDPPPVLRVDDRQRLARERREEREKQLAAREIVWLEREERARQHYEKHLEERKKRLEEQRQKEERRRAAVEEKRRQRLEEDKERHEAVVRRTMERSQKPKQKHNRWSWGGSLHGSPSIHSADPDRRSVSTMNLSKYVDPVISKRLSSSSATLLNSPDRARRLQLSPWESSVVNRLLTPTHSFLARSKSTAALSGEAASCSPIIMPYKAAHSRNSMDRPKLFVTPPEGSSRRRIIHGTASYKKERERENVLFLTSGTRRAVSPSNPKARQPARSRLWLPSKSLPHLPGTPRPTSSLPPGSVKAAPAQVRPPSPGNIRPVKREVKVEPEKKDPEKEPQKVANEPSLKGRAPLVKVEEATVEERTPAEPEVGPAAPAMAPAPASAPAPASAPAPAPVPTPAMVSAPSSTVNASASVKTSAGTTDPEEATRLLAEKRRLAREQREKEERERREQEELERQKREELAQRVAEERTTRREEESRRLEAEQAREKEEQLQRQAEERALREREEAERAQRQKEEEARVREEAERVRQEREKHFQREEQERLERKKRLEEIMKRTRRTEATDKKTSDQRNGDIAKGALTGGTEVSALPCTTNAPGNGKPVGSPHVVTSHQSKVTVESTPDLEKQPNENGVSVQNENFEEIINLPIGSKPSRLDVTNSESPEIPLNPILAFDDEGTLGPLPQVDGVQTQQTAEVI</sequence>
<accession>Q14244</accession>
<accession>B7Z290</accession>
<accession>B7Z400</accession>
<accession>B7Z5S7</accession>
<accession>B7Z9U7</accession>
<accession>C9JPS0</accession>
<accession>E9PCP3</accession>
<accession>F5H1E2</accession>
<accession>Q7Z6S0</accession>
<accession>Q8TAU5</accession>
<accession>Q9NY82</accession>
<accession>Q9NY83</accession>
<name>MAP7_HUMAN</name>